<accession>A8YUC9</accession>
<reference key="1">
    <citation type="journal article" date="2008" name="J. Bacteriol.">
        <title>Genome sequence of Lactobacillus helveticus: an organism distinguished by selective gene loss and IS element expansion.</title>
        <authorList>
            <person name="Callanan M."/>
            <person name="Kaleta P."/>
            <person name="O'Callaghan J."/>
            <person name="O'Sullivan O."/>
            <person name="Jordan K."/>
            <person name="McAuliffe O."/>
            <person name="Sangrador-Vegas A."/>
            <person name="Slattery L."/>
            <person name="Fitzgerald G.F."/>
            <person name="Beresford T."/>
            <person name="Ross R.P."/>
        </authorList>
    </citation>
    <scope>NUCLEOTIDE SEQUENCE [LARGE SCALE GENOMIC DNA]</scope>
    <source>
        <strain>DPC 4571</strain>
    </source>
</reference>
<organism>
    <name type="scientific">Lactobacillus helveticus (strain DPC 4571)</name>
    <dbReference type="NCBI Taxonomy" id="405566"/>
    <lineage>
        <taxon>Bacteria</taxon>
        <taxon>Bacillati</taxon>
        <taxon>Bacillota</taxon>
        <taxon>Bacilli</taxon>
        <taxon>Lactobacillales</taxon>
        <taxon>Lactobacillaceae</taxon>
        <taxon>Lactobacillus</taxon>
    </lineage>
</organism>
<gene>
    <name evidence="1" type="primary">gpsA</name>
    <name type="ordered locus">lhv_0725</name>
</gene>
<sequence>MTKIAVLGNGSWGSVLGSMLADNGNDVTLYGNIESVNEEINKTHTNSHYMKDWKLNENAKATGDLEEALNGAELVLFVLPTKAVRIVAKNVRKVLDKTGAKPLLVTATKGIEPGTKKLISEILTEEVYPNDEDKIVAISGPSHAENVAQKDLTAIACASTDEENAKKVQKIFSNDYVRFYTNDDLVGVEVGGAVKNVIAIAAGILVGQGYGDDAKAALMTRGLAEITRLGVNYFGAKPMTFSGLSGIGDLIVTCTSVNSRNWRAGKQIGEGKSLDYVLKNMGQVVEGATTVKAVHELSEEKNIDMPICDAIYRVLYENTDVAEEIKQMMGRDPKPEIRL</sequence>
<evidence type="ECO:0000255" key="1">
    <source>
        <dbReference type="HAMAP-Rule" id="MF_00394"/>
    </source>
</evidence>
<name>GPDA_LACH4</name>
<dbReference type="EC" id="1.1.1.94" evidence="1"/>
<dbReference type="EMBL" id="CP000517">
    <property type="protein sequence ID" value="ABX26867.1"/>
    <property type="molecule type" value="Genomic_DNA"/>
</dbReference>
<dbReference type="RefSeq" id="WP_003626023.1">
    <property type="nucleotide sequence ID" value="NC_010080.1"/>
</dbReference>
<dbReference type="SMR" id="A8YUC9"/>
<dbReference type="KEGG" id="lhe:lhv_0725"/>
<dbReference type="eggNOG" id="COG0240">
    <property type="taxonomic scope" value="Bacteria"/>
</dbReference>
<dbReference type="HOGENOM" id="CLU_033449_0_2_9"/>
<dbReference type="UniPathway" id="UPA00940"/>
<dbReference type="Proteomes" id="UP000000790">
    <property type="component" value="Chromosome"/>
</dbReference>
<dbReference type="GO" id="GO:0005829">
    <property type="term" value="C:cytosol"/>
    <property type="evidence" value="ECO:0007669"/>
    <property type="project" value="TreeGrafter"/>
</dbReference>
<dbReference type="GO" id="GO:0047952">
    <property type="term" value="F:glycerol-3-phosphate dehydrogenase [NAD(P)+] activity"/>
    <property type="evidence" value="ECO:0007669"/>
    <property type="project" value="UniProtKB-UniRule"/>
</dbReference>
<dbReference type="GO" id="GO:0051287">
    <property type="term" value="F:NAD binding"/>
    <property type="evidence" value="ECO:0007669"/>
    <property type="project" value="InterPro"/>
</dbReference>
<dbReference type="GO" id="GO:0005975">
    <property type="term" value="P:carbohydrate metabolic process"/>
    <property type="evidence" value="ECO:0007669"/>
    <property type="project" value="InterPro"/>
</dbReference>
<dbReference type="GO" id="GO:0046167">
    <property type="term" value="P:glycerol-3-phosphate biosynthetic process"/>
    <property type="evidence" value="ECO:0007669"/>
    <property type="project" value="UniProtKB-UniRule"/>
</dbReference>
<dbReference type="GO" id="GO:0046168">
    <property type="term" value="P:glycerol-3-phosphate catabolic process"/>
    <property type="evidence" value="ECO:0007669"/>
    <property type="project" value="InterPro"/>
</dbReference>
<dbReference type="GO" id="GO:0006650">
    <property type="term" value="P:glycerophospholipid metabolic process"/>
    <property type="evidence" value="ECO:0007669"/>
    <property type="project" value="UniProtKB-UniRule"/>
</dbReference>
<dbReference type="GO" id="GO:0008654">
    <property type="term" value="P:phospholipid biosynthetic process"/>
    <property type="evidence" value="ECO:0007669"/>
    <property type="project" value="UniProtKB-KW"/>
</dbReference>
<dbReference type="FunFam" id="1.10.1040.10:FF:000001">
    <property type="entry name" value="Glycerol-3-phosphate dehydrogenase [NAD(P)+]"/>
    <property type="match status" value="1"/>
</dbReference>
<dbReference type="FunFam" id="3.40.50.720:FF:000019">
    <property type="entry name" value="Glycerol-3-phosphate dehydrogenase [NAD(P)+]"/>
    <property type="match status" value="1"/>
</dbReference>
<dbReference type="Gene3D" id="1.10.1040.10">
    <property type="entry name" value="N-(1-d-carboxylethyl)-l-norvaline Dehydrogenase, domain 2"/>
    <property type="match status" value="1"/>
</dbReference>
<dbReference type="Gene3D" id="3.40.50.720">
    <property type="entry name" value="NAD(P)-binding Rossmann-like Domain"/>
    <property type="match status" value="1"/>
</dbReference>
<dbReference type="HAMAP" id="MF_00394">
    <property type="entry name" value="NAD_Glyc3P_dehydrog"/>
    <property type="match status" value="1"/>
</dbReference>
<dbReference type="InterPro" id="IPR008927">
    <property type="entry name" value="6-PGluconate_DH-like_C_sf"/>
</dbReference>
<dbReference type="InterPro" id="IPR013328">
    <property type="entry name" value="6PGD_dom2"/>
</dbReference>
<dbReference type="InterPro" id="IPR006168">
    <property type="entry name" value="G3P_DH_NAD-dep"/>
</dbReference>
<dbReference type="InterPro" id="IPR006109">
    <property type="entry name" value="G3P_DH_NAD-dep_C"/>
</dbReference>
<dbReference type="InterPro" id="IPR011128">
    <property type="entry name" value="G3P_DH_NAD-dep_N"/>
</dbReference>
<dbReference type="InterPro" id="IPR036291">
    <property type="entry name" value="NAD(P)-bd_dom_sf"/>
</dbReference>
<dbReference type="NCBIfam" id="NF000940">
    <property type="entry name" value="PRK00094.1-2"/>
    <property type="match status" value="1"/>
</dbReference>
<dbReference type="NCBIfam" id="NF000941">
    <property type="entry name" value="PRK00094.1-3"/>
    <property type="match status" value="1"/>
</dbReference>
<dbReference type="NCBIfam" id="NF000942">
    <property type="entry name" value="PRK00094.1-4"/>
    <property type="match status" value="1"/>
</dbReference>
<dbReference type="PANTHER" id="PTHR11728">
    <property type="entry name" value="GLYCEROL-3-PHOSPHATE DEHYDROGENASE"/>
    <property type="match status" value="1"/>
</dbReference>
<dbReference type="PANTHER" id="PTHR11728:SF1">
    <property type="entry name" value="GLYCEROL-3-PHOSPHATE DEHYDROGENASE [NAD(+)] 2, CHLOROPLASTIC"/>
    <property type="match status" value="1"/>
</dbReference>
<dbReference type="Pfam" id="PF07479">
    <property type="entry name" value="NAD_Gly3P_dh_C"/>
    <property type="match status" value="1"/>
</dbReference>
<dbReference type="Pfam" id="PF01210">
    <property type="entry name" value="NAD_Gly3P_dh_N"/>
    <property type="match status" value="1"/>
</dbReference>
<dbReference type="PIRSF" id="PIRSF000114">
    <property type="entry name" value="Glycerol-3-P_dh"/>
    <property type="match status" value="1"/>
</dbReference>
<dbReference type="PRINTS" id="PR00077">
    <property type="entry name" value="GPDHDRGNASE"/>
</dbReference>
<dbReference type="SUPFAM" id="SSF48179">
    <property type="entry name" value="6-phosphogluconate dehydrogenase C-terminal domain-like"/>
    <property type="match status" value="1"/>
</dbReference>
<dbReference type="SUPFAM" id="SSF51735">
    <property type="entry name" value="NAD(P)-binding Rossmann-fold domains"/>
    <property type="match status" value="1"/>
</dbReference>
<dbReference type="PROSITE" id="PS00957">
    <property type="entry name" value="NAD_G3PDH"/>
    <property type="match status" value="1"/>
</dbReference>
<protein>
    <recommendedName>
        <fullName evidence="1">Glycerol-3-phosphate dehydrogenase [NAD(P)+]</fullName>
        <ecNumber evidence="1">1.1.1.94</ecNumber>
    </recommendedName>
    <alternativeName>
        <fullName evidence="1">NAD(P)(+)-dependent glycerol-3-phosphate dehydrogenase</fullName>
    </alternativeName>
    <alternativeName>
        <fullName evidence="1">NAD(P)H-dependent dihydroxyacetone-phosphate reductase</fullName>
    </alternativeName>
</protein>
<proteinExistence type="inferred from homology"/>
<comment type="function">
    <text evidence="1">Catalyzes the reduction of the glycolytic intermediate dihydroxyacetone phosphate (DHAP) to sn-glycerol 3-phosphate (G3P), the key precursor for phospholipid synthesis.</text>
</comment>
<comment type="catalytic activity">
    <reaction evidence="1">
        <text>sn-glycerol 3-phosphate + NAD(+) = dihydroxyacetone phosphate + NADH + H(+)</text>
        <dbReference type="Rhea" id="RHEA:11092"/>
        <dbReference type="ChEBI" id="CHEBI:15378"/>
        <dbReference type="ChEBI" id="CHEBI:57540"/>
        <dbReference type="ChEBI" id="CHEBI:57597"/>
        <dbReference type="ChEBI" id="CHEBI:57642"/>
        <dbReference type="ChEBI" id="CHEBI:57945"/>
        <dbReference type="EC" id="1.1.1.94"/>
    </reaction>
    <physiologicalReaction direction="right-to-left" evidence="1">
        <dbReference type="Rhea" id="RHEA:11094"/>
    </physiologicalReaction>
</comment>
<comment type="catalytic activity">
    <reaction evidence="1">
        <text>sn-glycerol 3-phosphate + NADP(+) = dihydroxyacetone phosphate + NADPH + H(+)</text>
        <dbReference type="Rhea" id="RHEA:11096"/>
        <dbReference type="ChEBI" id="CHEBI:15378"/>
        <dbReference type="ChEBI" id="CHEBI:57597"/>
        <dbReference type="ChEBI" id="CHEBI:57642"/>
        <dbReference type="ChEBI" id="CHEBI:57783"/>
        <dbReference type="ChEBI" id="CHEBI:58349"/>
        <dbReference type="EC" id="1.1.1.94"/>
    </reaction>
    <physiologicalReaction direction="right-to-left" evidence="1">
        <dbReference type="Rhea" id="RHEA:11098"/>
    </physiologicalReaction>
</comment>
<comment type="pathway">
    <text evidence="1">Membrane lipid metabolism; glycerophospholipid metabolism.</text>
</comment>
<comment type="subcellular location">
    <subcellularLocation>
        <location evidence="1">Cytoplasm</location>
    </subcellularLocation>
</comment>
<comment type="similarity">
    <text evidence="1">Belongs to the NAD-dependent glycerol-3-phosphate dehydrogenase family.</text>
</comment>
<feature type="chain" id="PRO_1000072232" description="Glycerol-3-phosphate dehydrogenase [NAD(P)+]">
    <location>
        <begin position="1"/>
        <end position="339"/>
    </location>
</feature>
<feature type="active site" description="Proton acceptor" evidence="1">
    <location>
        <position position="195"/>
    </location>
</feature>
<feature type="binding site" evidence="1">
    <location>
        <position position="11"/>
    </location>
    <ligand>
        <name>NADPH</name>
        <dbReference type="ChEBI" id="CHEBI:57783"/>
    </ligand>
</feature>
<feature type="binding site" evidence="1">
    <location>
        <position position="12"/>
    </location>
    <ligand>
        <name>NADPH</name>
        <dbReference type="ChEBI" id="CHEBI:57783"/>
    </ligand>
</feature>
<feature type="binding site" evidence="1">
    <location>
        <position position="109"/>
    </location>
    <ligand>
        <name>NADPH</name>
        <dbReference type="ChEBI" id="CHEBI:57783"/>
    </ligand>
</feature>
<feature type="binding site" evidence="1">
    <location>
        <position position="109"/>
    </location>
    <ligand>
        <name>sn-glycerol 3-phosphate</name>
        <dbReference type="ChEBI" id="CHEBI:57597"/>
    </ligand>
</feature>
<feature type="binding site" evidence="1">
    <location>
        <position position="140"/>
    </location>
    <ligand>
        <name>sn-glycerol 3-phosphate</name>
        <dbReference type="ChEBI" id="CHEBI:57597"/>
    </ligand>
</feature>
<feature type="binding site" evidence="1">
    <location>
        <position position="142"/>
    </location>
    <ligand>
        <name>sn-glycerol 3-phosphate</name>
        <dbReference type="ChEBI" id="CHEBI:57597"/>
    </ligand>
</feature>
<feature type="binding site" evidence="1">
    <location>
        <position position="144"/>
    </location>
    <ligand>
        <name>NADPH</name>
        <dbReference type="ChEBI" id="CHEBI:57783"/>
    </ligand>
</feature>
<feature type="binding site" evidence="1">
    <location>
        <position position="195"/>
    </location>
    <ligand>
        <name>sn-glycerol 3-phosphate</name>
        <dbReference type="ChEBI" id="CHEBI:57597"/>
    </ligand>
</feature>
<feature type="binding site" evidence="1">
    <location>
        <position position="249"/>
    </location>
    <ligand>
        <name>sn-glycerol 3-phosphate</name>
        <dbReference type="ChEBI" id="CHEBI:57597"/>
    </ligand>
</feature>
<feature type="binding site" evidence="1">
    <location>
        <position position="259"/>
    </location>
    <ligand>
        <name>sn-glycerol 3-phosphate</name>
        <dbReference type="ChEBI" id="CHEBI:57597"/>
    </ligand>
</feature>
<feature type="binding site" evidence="1">
    <location>
        <position position="260"/>
    </location>
    <ligand>
        <name>NADPH</name>
        <dbReference type="ChEBI" id="CHEBI:57783"/>
    </ligand>
</feature>
<feature type="binding site" evidence="1">
    <location>
        <position position="260"/>
    </location>
    <ligand>
        <name>sn-glycerol 3-phosphate</name>
        <dbReference type="ChEBI" id="CHEBI:57597"/>
    </ligand>
</feature>
<feature type="binding site" evidence="1">
    <location>
        <position position="261"/>
    </location>
    <ligand>
        <name>sn-glycerol 3-phosphate</name>
        <dbReference type="ChEBI" id="CHEBI:57597"/>
    </ligand>
</feature>
<feature type="binding site" evidence="1">
    <location>
        <position position="284"/>
    </location>
    <ligand>
        <name>NADPH</name>
        <dbReference type="ChEBI" id="CHEBI:57783"/>
    </ligand>
</feature>
<feature type="binding site" evidence="1">
    <location>
        <position position="286"/>
    </location>
    <ligand>
        <name>NADPH</name>
        <dbReference type="ChEBI" id="CHEBI:57783"/>
    </ligand>
</feature>
<keyword id="KW-0963">Cytoplasm</keyword>
<keyword id="KW-0444">Lipid biosynthesis</keyword>
<keyword id="KW-0443">Lipid metabolism</keyword>
<keyword id="KW-0520">NAD</keyword>
<keyword id="KW-0521">NADP</keyword>
<keyword id="KW-0547">Nucleotide-binding</keyword>
<keyword id="KW-0560">Oxidoreductase</keyword>
<keyword id="KW-0594">Phospholipid biosynthesis</keyword>
<keyword id="KW-1208">Phospholipid metabolism</keyword>